<sequence>MNHSPQSARPVSIMRRFLDSEAAGGITLMAAAALALIVANSPFAQTYFDALHLYIGPLSLAHWINDALMAKFFLLVGLEIKREMLDGQLASWPNRMLPGIAAAGGVILPAIIFAVLNHDNPAKLRGWAVPSATDIAFALGVLSLLGSRAPSSLKVFLATLAILDDLAAVVIIAIFYTAEISMPYLGAAFITAAVLFVMNRMGVVKLLPYLISAVILWFFVFNSGVHATVAGVVAALMIPLKPAPGRPDDMTSPLHKLEHTLAKPVAFIVVPIFGFANAGISFKGLEASVLGDTLTLGILLGLFLGKQFGVFGAAWLAIKTGLAEKPMGASWVQLYGVAILCGIGFTMSIFIGLLSFPSDLMQTETKIGVLSGSALSAICGYLLLRAAARPKRG</sequence>
<proteinExistence type="inferred from homology"/>
<name>NHAA_BRUSI</name>
<gene>
    <name evidence="1" type="primary">nhaA</name>
    <name type="ordered locus">BSUIS_A0423</name>
</gene>
<organism>
    <name type="scientific">Brucella suis (strain ATCC 23445 / NCTC 10510)</name>
    <dbReference type="NCBI Taxonomy" id="470137"/>
    <lineage>
        <taxon>Bacteria</taxon>
        <taxon>Pseudomonadati</taxon>
        <taxon>Pseudomonadota</taxon>
        <taxon>Alphaproteobacteria</taxon>
        <taxon>Hyphomicrobiales</taxon>
        <taxon>Brucellaceae</taxon>
        <taxon>Brucella/Ochrobactrum group</taxon>
        <taxon>Brucella</taxon>
    </lineage>
</organism>
<feature type="chain" id="PRO_0000334248" description="Na(+)/H(+) antiporter NhaA">
    <location>
        <begin position="1"/>
        <end position="393"/>
    </location>
</feature>
<feature type="transmembrane region" description="Helical" evidence="1">
    <location>
        <begin position="23"/>
        <end position="43"/>
    </location>
</feature>
<feature type="transmembrane region" description="Helical" evidence="1">
    <location>
        <begin position="58"/>
        <end position="78"/>
    </location>
</feature>
<feature type="transmembrane region" description="Helical" evidence="1">
    <location>
        <begin position="96"/>
        <end position="116"/>
    </location>
</feature>
<feature type="transmembrane region" description="Helical" evidence="1">
    <location>
        <begin position="126"/>
        <end position="146"/>
    </location>
</feature>
<feature type="transmembrane region" description="Helical" evidence="1">
    <location>
        <begin position="155"/>
        <end position="175"/>
    </location>
</feature>
<feature type="transmembrane region" description="Helical" evidence="1">
    <location>
        <begin position="178"/>
        <end position="198"/>
    </location>
</feature>
<feature type="transmembrane region" description="Helical" evidence="1">
    <location>
        <begin position="201"/>
        <end position="221"/>
    </location>
</feature>
<feature type="transmembrane region" description="Helical" evidence="1">
    <location>
        <begin position="224"/>
        <end position="244"/>
    </location>
</feature>
<feature type="transmembrane region" description="Helical" evidence="1">
    <location>
        <begin position="265"/>
        <end position="285"/>
    </location>
</feature>
<feature type="transmembrane region" description="Helical" evidence="1">
    <location>
        <begin position="298"/>
        <end position="318"/>
    </location>
</feature>
<feature type="transmembrane region" description="Helical" evidence="1">
    <location>
        <begin position="334"/>
        <end position="354"/>
    </location>
</feature>
<feature type="transmembrane region" description="Helical" evidence="1">
    <location>
        <begin position="367"/>
        <end position="387"/>
    </location>
</feature>
<protein>
    <recommendedName>
        <fullName evidence="1">Na(+)/H(+) antiporter NhaA</fullName>
    </recommendedName>
    <alternativeName>
        <fullName evidence="1">Sodium/proton antiporter NhaA</fullName>
    </alternativeName>
</protein>
<accession>B0CK83</accession>
<reference key="1">
    <citation type="submission" date="2007-12" db="EMBL/GenBank/DDBJ databases">
        <title>Brucella suis ATCC 23445 whole genome shotgun sequencing project.</title>
        <authorList>
            <person name="Setubal J.C."/>
            <person name="Bowns C."/>
            <person name="Boyle S."/>
            <person name="Crasta O.R."/>
            <person name="Czar M.J."/>
            <person name="Dharmanolla C."/>
            <person name="Gillespie J.J."/>
            <person name="Kenyon R.W."/>
            <person name="Lu J."/>
            <person name="Mane S."/>
            <person name="Mohapatra S."/>
            <person name="Nagrani S."/>
            <person name="Purkayastha A."/>
            <person name="Rajasimha H.K."/>
            <person name="Shallom J.M."/>
            <person name="Shallom S."/>
            <person name="Shukla M."/>
            <person name="Snyder E.E."/>
            <person name="Sobral B.W."/>
            <person name="Wattam A.R."/>
            <person name="Will R."/>
            <person name="Williams K."/>
            <person name="Yoo H."/>
            <person name="Bruce D."/>
            <person name="Detter C."/>
            <person name="Munk C."/>
            <person name="Brettin T.S."/>
        </authorList>
    </citation>
    <scope>NUCLEOTIDE SEQUENCE [LARGE SCALE GENOMIC DNA]</scope>
    <source>
        <strain>ATCC 23445 / NCTC 10510</strain>
    </source>
</reference>
<evidence type="ECO:0000255" key="1">
    <source>
        <dbReference type="HAMAP-Rule" id="MF_01844"/>
    </source>
</evidence>
<keyword id="KW-0050">Antiport</keyword>
<keyword id="KW-0997">Cell inner membrane</keyword>
<keyword id="KW-1003">Cell membrane</keyword>
<keyword id="KW-0406">Ion transport</keyword>
<keyword id="KW-0472">Membrane</keyword>
<keyword id="KW-0915">Sodium</keyword>
<keyword id="KW-0739">Sodium transport</keyword>
<keyword id="KW-0812">Transmembrane</keyword>
<keyword id="KW-1133">Transmembrane helix</keyword>
<keyword id="KW-0813">Transport</keyword>
<dbReference type="EMBL" id="CP000911">
    <property type="protein sequence ID" value="ABY37513.1"/>
    <property type="molecule type" value="Genomic_DNA"/>
</dbReference>
<dbReference type="RefSeq" id="WP_006072203.1">
    <property type="nucleotide sequence ID" value="NC_010169.1"/>
</dbReference>
<dbReference type="SMR" id="B0CK83"/>
<dbReference type="KEGG" id="bmt:BSUIS_A0423"/>
<dbReference type="HOGENOM" id="CLU_015803_1_0_5"/>
<dbReference type="Proteomes" id="UP000008545">
    <property type="component" value="Chromosome I"/>
</dbReference>
<dbReference type="GO" id="GO:0005886">
    <property type="term" value="C:plasma membrane"/>
    <property type="evidence" value="ECO:0007669"/>
    <property type="project" value="UniProtKB-SubCell"/>
</dbReference>
<dbReference type="GO" id="GO:0015385">
    <property type="term" value="F:sodium:proton antiporter activity"/>
    <property type="evidence" value="ECO:0007669"/>
    <property type="project" value="TreeGrafter"/>
</dbReference>
<dbReference type="GO" id="GO:0006885">
    <property type="term" value="P:regulation of pH"/>
    <property type="evidence" value="ECO:0007669"/>
    <property type="project" value="InterPro"/>
</dbReference>
<dbReference type="Gene3D" id="1.20.1530.10">
    <property type="entry name" value="Na+/H+ antiporter like domain"/>
    <property type="match status" value="1"/>
</dbReference>
<dbReference type="HAMAP" id="MF_01844">
    <property type="entry name" value="NhaA"/>
    <property type="match status" value="1"/>
</dbReference>
<dbReference type="InterPro" id="IPR023171">
    <property type="entry name" value="Na/H_antiporter_dom_sf"/>
</dbReference>
<dbReference type="InterPro" id="IPR004670">
    <property type="entry name" value="NhaA"/>
</dbReference>
<dbReference type="NCBIfam" id="TIGR00773">
    <property type="entry name" value="NhaA"/>
    <property type="match status" value="1"/>
</dbReference>
<dbReference type="NCBIfam" id="NF007111">
    <property type="entry name" value="PRK09560.1"/>
    <property type="match status" value="1"/>
</dbReference>
<dbReference type="NCBIfam" id="NF007112">
    <property type="entry name" value="PRK09561.1"/>
    <property type="match status" value="1"/>
</dbReference>
<dbReference type="PANTHER" id="PTHR30341:SF0">
    <property type="entry name" value="NA(+)_H(+) ANTIPORTER NHAA"/>
    <property type="match status" value="1"/>
</dbReference>
<dbReference type="PANTHER" id="PTHR30341">
    <property type="entry name" value="SODIUM ION/PROTON ANTIPORTER NHAA-RELATED"/>
    <property type="match status" value="1"/>
</dbReference>
<dbReference type="Pfam" id="PF06965">
    <property type="entry name" value="Na_H_antiport_1"/>
    <property type="match status" value="1"/>
</dbReference>
<comment type="function">
    <text evidence="1">Na(+)/H(+) antiporter that extrudes sodium in exchange for external protons.</text>
</comment>
<comment type="catalytic activity">
    <reaction evidence="1">
        <text>Na(+)(in) + 2 H(+)(out) = Na(+)(out) + 2 H(+)(in)</text>
        <dbReference type="Rhea" id="RHEA:29251"/>
        <dbReference type="ChEBI" id="CHEBI:15378"/>
        <dbReference type="ChEBI" id="CHEBI:29101"/>
    </reaction>
    <physiologicalReaction direction="left-to-right" evidence="1">
        <dbReference type="Rhea" id="RHEA:29252"/>
    </physiologicalReaction>
</comment>
<comment type="subcellular location">
    <subcellularLocation>
        <location evidence="1">Cell inner membrane</location>
        <topology evidence="1">Multi-pass membrane protein</topology>
    </subcellularLocation>
</comment>
<comment type="similarity">
    <text evidence="1">Belongs to the NhaA Na(+)/H(+) (TC 2.A.33) antiporter family.</text>
</comment>